<keyword id="KW-0120">Carbon dioxide fixation</keyword>
<keyword id="KW-0456">Lyase</keyword>
<keyword id="KW-0460">Magnesium</keyword>
<proteinExistence type="inferred from homology"/>
<comment type="function">
    <text evidence="1">Forms oxaloacetate, a four-carbon dicarboxylic acid source for the tricarboxylic acid cycle.</text>
</comment>
<comment type="catalytic activity">
    <reaction evidence="1">
        <text>oxaloacetate + phosphate = phosphoenolpyruvate + hydrogencarbonate</text>
        <dbReference type="Rhea" id="RHEA:28370"/>
        <dbReference type="ChEBI" id="CHEBI:16452"/>
        <dbReference type="ChEBI" id="CHEBI:17544"/>
        <dbReference type="ChEBI" id="CHEBI:43474"/>
        <dbReference type="ChEBI" id="CHEBI:58702"/>
        <dbReference type="EC" id="4.1.1.31"/>
    </reaction>
</comment>
<comment type="cofactor">
    <cofactor evidence="1">
        <name>Mg(2+)</name>
        <dbReference type="ChEBI" id="CHEBI:18420"/>
    </cofactor>
</comment>
<comment type="similarity">
    <text evidence="1">Belongs to the PEPCase type 1 family.</text>
</comment>
<gene>
    <name evidence="1" type="primary">ppc</name>
    <name type="ordered locus">CGSHiEE_05850</name>
</gene>
<protein>
    <recommendedName>
        <fullName evidence="1">Phosphoenolpyruvate carboxylase</fullName>
        <shortName evidence="1">PEPC</shortName>
        <shortName evidence="1">PEPCase</shortName>
        <ecNumber evidence="1">4.1.1.31</ecNumber>
    </recommendedName>
</protein>
<feature type="chain" id="PRO_1000025560" description="Phosphoenolpyruvate carboxylase">
    <location>
        <begin position="1"/>
        <end position="879"/>
    </location>
</feature>
<feature type="active site" evidence="1">
    <location>
        <position position="138"/>
    </location>
</feature>
<feature type="active site" evidence="1">
    <location>
        <position position="545"/>
    </location>
</feature>
<organism>
    <name type="scientific">Haemophilus influenzae (strain PittEE)</name>
    <dbReference type="NCBI Taxonomy" id="374930"/>
    <lineage>
        <taxon>Bacteria</taxon>
        <taxon>Pseudomonadati</taxon>
        <taxon>Pseudomonadota</taxon>
        <taxon>Gammaproteobacteria</taxon>
        <taxon>Pasteurellales</taxon>
        <taxon>Pasteurellaceae</taxon>
        <taxon>Haemophilus</taxon>
    </lineage>
</organism>
<evidence type="ECO:0000255" key="1">
    <source>
        <dbReference type="HAMAP-Rule" id="MF_00595"/>
    </source>
</evidence>
<name>CAPP_HAEIE</name>
<dbReference type="EC" id="4.1.1.31" evidence="1"/>
<dbReference type="EMBL" id="CP000671">
    <property type="protein sequence ID" value="ABQ98531.1"/>
    <property type="molecule type" value="Genomic_DNA"/>
</dbReference>
<dbReference type="SMR" id="A5UCN0"/>
<dbReference type="KEGG" id="hip:CGSHiEE_05850"/>
<dbReference type="HOGENOM" id="CLU_006557_2_0_6"/>
<dbReference type="GO" id="GO:0005829">
    <property type="term" value="C:cytosol"/>
    <property type="evidence" value="ECO:0007669"/>
    <property type="project" value="TreeGrafter"/>
</dbReference>
<dbReference type="GO" id="GO:0000287">
    <property type="term" value="F:magnesium ion binding"/>
    <property type="evidence" value="ECO:0007669"/>
    <property type="project" value="UniProtKB-UniRule"/>
</dbReference>
<dbReference type="GO" id="GO:0008964">
    <property type="term" value="F:phosphoenolpyruvate carboxylase activity"/>
    <property type="evidence" value="ECO:0007669"/>
    <property type="project" value="UniProtKB-UniRule"/>
</dbReference>
<dbReference type="GO" id="GO:0015977">
    <property type="term" value="P:carbon fixation"/>
    <property type="evidence" value="ECO:0007669"/>
    <property type="project" value="UniProtKB-UniRule"/>
</dbReference>
<dbReference type="GO" id="GO:0006107">
    <property type="term" value="P:oxaloacetate metabolic process"/>
    <property type="evidence" value="ECO:0007669"/>
    <property type="project" value="UniProtKB-UniRule"/>
</dbReference>
<dbReference type="GO" id="GO:0006099">
    <property type="term" value="P:tricarboxylic acid cycle"/>
    <property type="evidence" value="ECO:0007669"/>
    <property type="project" value="InterPro"/>
</dbReference>
<dbReference type="FunFam" id="1.20.1440.90:FF:000002">
    <property type="entry name" value="Phosphoenolpyruvate carboxylase"/>
    <property type="match status" value="1"/>
</dbReference>
<dbReference type="Gene3D" id="1.20.1440.90">
    <property type="entry name" value="Phosphoenolpyruvate/pyruvate domain"/>
    <property type="match status" value="1"/>
</dbReference>
<dbReference type="HAMAP" id="MF_00595">
    <property type="entry name" value="PEPcase_type1"/>
    <property type="match status" value="1"/>
</dbReference>
<dbReference type="InterPro" id="IPR021135">
    <property type="entry name" value="PEP_COase"/>
</dbReference>
<dbReference type="InterPro" id="IPR022805">
    <property type="entry name" value="PEP_COase_bac/pln-type"/>
</dbReference>
<dbReference type="InterPro" id="IPR018129">
    <property type="entry name" value="PEP_COase_Lys_AS"/>
</dbReference>
<dbReference type="InterPro" id="IPR033129">
    <property type="entry name" value="PEPCASE_His_AS"/>
</dbReference>
<dbReference type="InterPro" id="IPR015813">
    <property type="entry name" value="Pyrv/PenolPyrv_kinase-like_dom"/>
</dbReference>
<dbReference type="NCBIfam" id="NF000584">
    <property type="entry name" value="PRK00009.1"/>
    <property type="match status" value="1"/>
</dbReference>
<dbReference type="PANTHER" id="PTHR30523">
    <property type="entry name" value="PHOSPHOENOLPYRUVATE CARBOXYLASE"/>
    <property type="match status" value="1"/>
</dbReference>
<dbReference type="PANTHER" id="PTHR30523:SF6">
    <property type="entry name" value="PHOSPHOENOLPYRUVATE CARBOXYLASE"/>
    <property type="match status" value="1"/>
</dbReference>
<dbReference type="Pfam" id="PF00311">
    <property type="entry name" value="PEPcase"/>
    <property type="match status" value="1"/>
</dbReference>
<dbReference type="PRINTS" id="PR00150">
    <property type="entry name" value="PEPCARBXLASE"/>
</dbReference>
<dbReference type="SUPFAM" id="SSF51621">
    <property type="entry name" value="Phosphoenolpyruvate/pyruvate domain"/>
    <property type="match status" value="1"/>
</dbReference>
<dbReference type="PROSITE" id="PS00781">
    <property type="entry name" value="PEPCASE_1"/>
    <property type="match status" value="1"/>
</dbReference>
<dbReference type="PROSITE" id="PS00393">
    <property type="entry name" value="PEPCASE_2"/>
    <property type="match status" value="1"/>
</dbReference>
<reference key="1">
    <citation type="journal article" date="2007" name="Genome Biol.">
        <title>Characterization and modeling of the Haemophilus influenzae core and supragenomes based on the complete genomic sequences of Rd and 12 clinical nontypeable strains.</title>
        <authorList>
            <person name="Hogg J.S."/>
            <person name="Hu F.Z."/>
            <person name="Janto B."/>
            <person name="Boissy R."/>
            <person name="Hayes J."/>
            <person name="Keefe R."/>
            <person name="Post J.C."/>
            <person name="Ehrlich G.D."/>
        </authorList>
    </citation>
    <scope>NUCLEOTIDE SEQUENCE [LARGE SCALE GENOMIC DNA]</scope>
    <source>
        <strain>PittEE</strain>
    </source>
</reference>
<accession>A5UCN0</accession>
<sequence>MTQEYSTLRNNISMLGRFLGETINDAQGEDILELIENIRKLSRNSRAGDDKARQALLDTLGSISNENIIPVARAFSQFLNLTNIAEQYQTISREHSLAQSSSQSLSELFKRLKEQNASVEEVHKTVEKLLIELVLTAHPTETTRRSLIHKHIEINKCLSKLEHHDLTEKERNIIERLLLRLIAEAWHTNEIRTVRPTPFDEAKWGFAMLENSLWQAVPEFLRQLNETAREFLGYDLPVGLKPVRISSWMGGDRDGNPFVTAQITKKVLYFARWKAADLFLQDISKLADELSMMKCSDEFRDKYGEHLEPYRFVVKNLRNQLTATLAYFDDHLSNRTPRVSESEIILEDNQLWEPLYDCYQSLIQYGMRIIANGSLLNILHRISCFGVTLSQMDIRQESTRHTDAIAEITRYIGLGDYAQWTEDDKQAFLIRELSSRRPLIPQNWTPSPETQEILDTCKVIAQQKQGVIACYVISMARNASDVLAVHLLLKEAGVPYHIPVVPLFETLEDLDAAEKVMTQLFNVGWYRGVINNRQMVMIGYSDSAKDAGMMAASWAQYRAQEALVNLTEKLGIELTLFHGRGGTIGRGGAPAHAALLSQPPRSLKNGLRVTEQGEMIRFKLGLPTVAVETFDLYASAILEANLLPPPEPKPEWRNIMDELSTISCDIYRGVVRGDKDFVPYFRSATPEQELSKLPLGSRPAKRNPNGGVESLRAIPWIFAWMQNRLMLPAWLGAGASIRQIIEQGKGDIIHKMCENWPFFSTRIGMLEMVFSKSDTWLSQQYDQRLVKKELWYLGENLRKQLEDDIQTVLSLSHQSELMSDLPWIADSIALRNIYTDPLNLLQVELLHRFRENPEQVNPDVEQALMITITGIAAGMRNTG</sequence>